<name>SYFA_CLOPE</name>
<accession>Q8XJ75</accession>
<sequence length="341" mass="38659">MKMQDKLNQIKELALVEIKEAKDSTTIDTIRVKYLGKKGELTTILRGMGSLSKEERPIVGKLANEVREVLEAELEAITKAVKEAEKQEKLKNEVIDISMPGKKQTIGKKHPLEQTLDEMKKIFVSMGFAIEDGPEVEKDYYNFEALNIPKNHPARSEQDTFYINDNVVLRTQTSPVQARVMEKQQPPIKMISPGKVFRSDAVDATHSPIFYQMEGLVIDKDITFADLKGTLELFAKKMFGDKVKTKFRPHHFPFTEPSAEMDATCFVCNGKGCKVCKGEGWIEILGCGMVHPQVLRNCGIDPEVYSGFAFGFGVDRMVMLKYGIDDIRLLYESDMRFLNQF</sequence>
<dbReference type="EC" id="6.1.1.20" evidence="1"/>
<dbReference type="EMBL" id="BA000016">
    <property type="protein sequence ID" value="BAB81592.1"/>
    <property type="molecule type" value="Genomic_DNA"/>
</dbReference>
<dbReference type="SMR" id="Q8XJ75"/>
<dbReference type="STRING" id="195102.gene:10491151"/>
<dbReference type="KEGG" id="cpe:CPE1886"/>
<dbReference type="HOGENOM" id="CLU_025086_0_1_9"/>
<dbReference type="Proteomes" id="UP000000818">
    <property type="component" value="Chromosome"/>
</dbReference>
<dbReference type="GO" id="GO:0005737">
    <property type="term" value="C:cytoplasm"/>
    <property type="evidence" value="ECO:0007669"/>
    <property type="project" value="UniProtKB-SubCell"/>
</dbReference>
<dbReference type="GO" id="GO:0005524">
    <property type="term" value="F:ATP binding"/>
    <property type="evidence" value="ECO:0007669"/>
    <property type="project" value="UniProtKB-UniRule"/>
</dbReference>
<dbReference type="GO" id="GO:0140096">
    <property type="term" value="F:catalytic activity, acting on a protein"/>
    <property type="evidence" value="ECO:0007669"/>
    <property type="project" value="UniProtKB-ARBA"/>
</dbReference>
<dbReference type="GO" id="GO:0000287">
    <property type="term" value="F:magnesium ion binding"/>
    <property type="evidence" value="ECO:0007669"/>
    <property type="project" value="UniProtKB-UniRule"/>
</dbReference>
<dbReference type="GO" id="GO:0004826">
    <property type="term" value="F:phenylalanine-tRNA ligase activity"/>
    <property type="evidence" value="ECO:0007669"/>
    <property type="project" value="UniProtKB-UniRule"/>
</dbReference>
<dbReference type="GO" id="GO:0016740">
    <property type="term" value="F:transferase activity"/>
    <property type="evidence" value="ECO:0007669"/>
    <property type="project" value="UniProtKB-ARBA"/>
</dbReference>
<dbReference type="GO" id="GO:0000049">
    <property type="term" value="F:tRNA binding"/>
    <property type="evidence" value="ECO:0007669"/>
    <property type="project" value="InterPro"/>
</dbReference>
<dbReference type="GO" id="GO:0006432">
    <property type="term" value="P:phenylalanyl-tRNA aminoacylation"/>
    <property type="evidence" value="ECO:0007669"/>
    <property type="project" value="UniProtKB-UniRule"/>
</dbReference>
<dbReference type="CDD" id="cd00496">
    <property type="entry name" value="PheRS_alpha_core"/>
    <property type="match status" value="1"/>
</dbReference>
<dbReference type="FunFam" id="3.30.930.10:FF:000003">
    <property type="entry name" value="Phenylalanine--tRNA ligase alpha subunit"/>
    <property type="match status" value="1"/>
</dbReference>
<dbReference type="Gene3D" id="3.30.930.10">
    <property type="entry name" value="Bira Bifunctional Protein, Domain 2"/>
    <property type="match status" value="1"/>
</dbReference>
<dbReference type="HAMAP" id="MF_00281">
    <property type="entry name" value="Phe_tRNA_synth_alpha1"/>
    <property type="match status" value="1"/>
</dbReference>
<dbReference type="InterPro" id="IPR006195">
    <property type="entry name" value="aa-tRNA-synth_II"/>
</dbReference>
<dbReference type="InterPro" id="IPR045864">
    <property type="entry name" value="aa-tRNA-synth_II/BPL/LPL"/>
</dbReference>
<dbReference type="InterPro" id="IPR004529">
    <property type="entry name" value="Phe-tRNA-synth_IIc_asu"/>
</dbReference>
<dbReference type="InterPro" id="IPR004188">
    <property type="entry name" value="Phe-tRNA_ligase_II_N"/>
</dbReference>
<dbReference type="InterPro" id="IPR022911">
    <property type="entry name" value="Phe_tRNA_ligase_alpha1_bac"/>
</dbReference>
<dbReference type="InterPro" id="IPR002319">
    <property type="entry name" value="Phenylalanyl-tRNA_Synthase"/>
</dbReference>
<dbReference type="InterPro" id="IPR010978">
    <property type="entry name" value="tRNA-bd_arm"/>
</dbReference>
<dbReference type="NCBIfam" id="TIGR00468">
    <property type="entry name" value="pheS"/>
    <property type="match status" value="1"/>
</dbReference>
<dbReference type="PANTHER" id="PTHR11538:SF41">
    <property type="entry name" value="PHENYLALANINE--TRNA LIGASE, MITOCHONDRIAL"/>
    <property type="match status" value="1"/>
</dbReference>
<dbReference type="PANTHER" id="PTHR11538">
    <property type="entry name" value="PHENYLALANYL-TRNA SYNTHETASE"/>
    <property type="match status" value="1"/>
</dbReference>
<dbReference type="Pfam" id="PF02912">
    <property type="entry name" value="Phe_tRNA-synt_N"/>
    <property type="match status" value="1"/>
</dbReference>
<dbReference type="Pfam" id="PF01409">
    <property type="entry name" value="tRNA-synt_2d"/>
    <property type="match status" value="1"/>
</dbReference>
<dbReference type="SUPFAM" id="SSF55681">
    <property type="entry name" value="Class II aaRS and biotin synthetases"/>
    <property type="match status" value="1"/>
</dbReference>
<dbReference type="SUPFAM" id="SSF46589">
    <property type="entry name" value="tRNA-binding arm"/>
    <property type="match status" value="1"/>
</dbReference>
<dbReference type="PROSITE" id="PS50862">
    <property type="entry name" value="AA_TRNA_LIGASE_II"/>
    <property type="match status" value="1"/>
</dbReference>
<proteinExistence type="inferred from homology"/>
<organism>
    <name type="scientific">Clostridium perfringens (strain 13 / Type A)</name>
    <dbReference type="NCBI Taxonomy" id="195102"/>
    <lineage>
        <taxon>Bacteria</taxon>
        <taxon>Bacillati</taxon>
        <taxon>Bacillota</taxon>
        <taxon>Clostridia</taxon>
        <taxon>Eubacteriales</taxon>
        <taxon>Clostridiaceae</taxon>
        <taxon>Clostridium</taxon>
    </lineage>
</organism>
<protein>
    <recommendedName>
        <fullName evidence="1">Phenylalanine--tRNA ligase alpha subunit</fullName>
        <ecNumber evidence="1">6.1.1.20</ecNumber>
    </recommendedName>
    <alternativeName>
        <fullName evidence="1">Phenylalanyl-tRNA synthetase alpha subunit</fullName>
        <shortName evidence="1">PheRS</shortName>
    </alternativeName>
</protein>
<comment type="catalytic activity">
    <reaction evidence="1">
        <text>tRNA(Phe) + L-phenylalanine + ATP = L-phenylalanyl-tRNA(Phe) + AMP + diphosphate + H(+)</text>
        <dbReference type="Rhea" id="RHEA:19413"/>
        <dbReference type="Rhea" id="RHEA-COMP:9668"/>
        <dbReference type="Rhea" id="RHEA-COMP:9699"/>
        <dbReference type="ChEBI" id="CHEBI:15378"/>
        <dbReference type="ChEBI" id="CHEBI:30616"/>
        <dbReference type="ChEBI" id="CHEBI:33019"/>
        <dbReference type="ChEBI" id="CHEBI:58095"/>
        <dbReference type="ChEBI" id="CHEBI:78442"/>
        <dbReference type="ChEBI" id="CHEBI:78531"/>
        <dbReference type="ChEBI" id="CHEBI:456215"/>
        <dbReference type="EC" id="6.1.1.20"/>
    </reaction>
</comment>
<comment type="cofactor">
    <cofactor evidence="1">
        <name>Mg(2+)</name>
        <dbReference type="ChEBI" id="CHEBI:18420"/>
    </cofactor>
    <text evidence="1">Binds 2 magnesium ions per tetramer.</text>
</comment>
<comment type="subunit">
    <text evidence="1">Tetramer of two alpha and two beta subunits.</text>
</comment>
<comment type="subcellular location">
    <subcellularLocation>
        <location evidence="1">Cytoplasm</location>
    </subcellularLocation>
</comment>
<comment type="similarity">
    <text evidence="1">Belongs to the class-II aminoacyl-tRNA synthetase family. Phe-tRNA synthetase alpha subunit type 1 subfamily.</text>
</comment>
<keyword id="KW-0030">Aminoacyl-tRNA synthetase</keyword>
<keyword id="KW-0067">ATP-binding</keyword>
<keyword id="KW-0963">Cytoplasm</keyword>
<keyword id="KW-0436">Ligase</keyword>
<keyword id="KW-0460">Magnesium</keyword>
<keyword id="KW-0479">Metal-binding</keyword>
<keyword id="KW-0547">Nucleotide-binding</keyword>
<keyword id="KW-0648">Protein biosynthesis</keyword>
<keyword id="KW-1185">Reference proteome</keyword>
<reference key="1">
    <citation type="journal article" date="2002" name="Proc. Natl. Acad. Sci. U.S.A.">
        <title>Complete genome sequence of Clostridium perfringens, an anaerobic flesh-eater.</title>
        <authorList>
            <person name="Shimizu T."/>
            <person name="Ohtani K."/>
            <person name="Hirakawa H."/>
            <person name="Ohshima K."/>
            <person name="Yamashita A."/>
            <person name="Shiba T."/>
            <person name="Ogasawara N."/>
            <person name="Hattori M."/>
            <person name="Kuhara S."/>
            <person name="Hayashi H."/>
        </authorList>
    </citation>
    <scope>NUCLEOTIDE SEQUENCE [LARGE SCALE GENOMIC DNA]</scope>
    <source>
        <strain>13 / Type A</strain>
    </source>
</reference>
<gene>
    <name evidence="1" type="primary">pheS</name>
    <name type="ordered locus">CPE1886</name>
</gene>
<evidence type="ECO:0000255" key="1">
    <source>
        <dbReference type="HAMAP-Rule" id="MF_00281"/>
    </source>
</evidence>
<feature type="chain" id="PRO_0000126692" description="Phenylalanine--tRNA ligase alpha subunit">
    <location>
        <begin position="1"/>
        <end position="341"/>
    </location>
</feature>
<feature type="binding site" evidence="1">
    <location>
        <position position="256"/>
    </location>
    <ligand>
        <name>Mg(2+)</name>
        <dbReference type="ChEBI" id="CHEBI:18420"/>
        <note>shared with beta subunit</note>
    </ligand>
</feature>